<accession>A6USK4</accession>
<evidence type="ECO:0000250" key="1">
    <source>
        <dbReference type="UniProtKB" id="O59284"/>
    </source>
</evidence>
<evidence type="ECO:0000250" key="2">
    <source>
        <dbReference type="UniProtKB" id="P11759"/>
    </source>
</evidence>
<evidence type="ECO:0000250" key="3">
    <source>
        <dbReference type="UniProtKB" id="Q6LZC3"/>
    </source>
</evidence>
<evidence type="ECO:0000305" key="4"/>
<keyword id="KW-0520">NAD</keyword>
<keyword id="KW-0560">Oxidoreductase</keyword>
<organism>
    <name type="scientific">Methanococcus vannielii (strain ATCC 35089 / DSM 1224 / JCM 13029 / OCM 148 / SB)</name>
    <dbReference type="NCBI Taxonomy" id="406327"/>
    <lineage>
        <taxon>Archaea</taxon>
        <taxon>Methanobacteriati</taxon>
        <taxon>Methanobacteriota</taxon>
        <taxon>Methanomada group</taxon>
        <taxon>Methanococci</taxon>
        <taxon>Methanococcales</taxon>
        <taxon>Methanococcaceae</taxon>
        <taxon>Methanococcus</taxon>
    </lineage>
</organism>
<name>WECC_METVS</name>
<dbReference type="EC" id="1.1.1.336" evidence="3"/>
<dbReference type="EMBL" id="CP000742">
    <property type="protein sequence ID" value="ABR55476.1"/>
    <property type="molecule type" value="Genomic_DNA"/>
</dbReference>
<dbReference type="RefSeq" id="WP_012066390.1">
    <property type="nucleotide sequence ID" value="NC_009634.1"/>
</dbReference>
<dbReference type="SMR" id="A6USK4"/>
<dbReference type="STRING" id="406327.Mevan_1584"/>
<dbReference type="GeneID" id="5324798"/>
<dbReference type="KEGG" id="mvn:Mevan_1584"/>
<dbReference type="eggNOG" id="arCOG00252">
    <property type="taxonomic scope" value="Archaea"/>
</dbReference>
<dbReference type="HOGENOM" id="CLU_023810_3_2_2"/>
<dbReference type="OrthoDB" id="372050at2157"/>
<dbReference type="Proteomes" id="UP000001107">
    <property type="component" value="Chromosome"/>
</dbReference>
<dbReference type="GO" id="GO:0051287">
    <property type="term" value="F:NAD binding"/>
    <property type="evidence" value="ECO:0007669"/>
    <property type="project" value="InterPro"/>
</dbReference>
<dbReference type="GO" id="GO:0016628">
    <property type="term" value="F:oxidoreductase activity, acting on the CH-CH group of donors, NAD or NADP as acceptor"/>
    <property type="evidence" value="ECO:0007669"/>
    <property type="project" value="InterPro"/>
</dbReference>
<dbReference type="GO" id="GO:0089714">
    <property type="term" value="F:UDP-N-acetyl-D-mannosamine dehydrogenase activity"/>
    <property type="evidence" value="ECO:0007669"/>
    <property type="project" value="UniProtKB-EC"/>
</dbReference>
<dbReference type="GO" id="GO:0000271">
    <property type="term" value="P:polysaccharide biosynthetic process"/>
    <property type="evidence" value="ECO:0007669"/>
    <property type="project" value="InterPro"/>
</dbReference>
<dbReference type="FunFam" id="3.40.50.720:FF:000945">
    <property type="entry name" value="UDP-glucose/GDP-mannose dehydrogenase family protein"/>
    <property type="match status" value="1"/>
</dbReference>
<dbReference type="Gene3D" id="3.40.50.720">
    <property type="entry name" value="NAD(P)-binding Rossmann-like Domain"/>
    <property type="match status" value="2"/>
</dbReference>
<dbReference type="InterPro" id="IPR008927">
    <property type="entry name" value="6-PGluconate_DH-like_C_sf"/>
</dbReference>
<dbReference type="InterPro" id="IPR036291">
    <property type="entry name" value="NAD(P)-bd_dom_sf"/>
</dbReference>
<dbReference type="InterPro" id="IPR017476">
    <property type="entry name" value="UDP-Glc/GDP-Man"/>
</dbReference>
<dbReference type="InterPro" id="IPR014027">
    <property type="entry name" value="UDP-Glc/GDP-Man_DH_C"/>
</dbReference>
<dbReference type="InterPro" id="IPR036220">
    <property type="entry name" value="UDP-Glc/GDP-Man_DH_C_sf"/>
</dbReference>
<dbReference type="InterPro" id="IPR014026">
    <property type="entry name" value="UDP-Glc/GDP-Man_DH_dimer"/>
</dbReference>
<dbReference type="InterPro" id="IPR001732">
    <property type="entry name" value="UDP-Glc/GDP-Man_DH_N"/>
</dbReference>
<dbReference type="InterPro" id="IPR028359">
    <property type="entry name" value="UDP_ManNAc/GlcNAc_DH"/>
</dbReference>
<dbReference type="NCBIfam" id="TIGR03026">
    <property type="entry name" value="NDP-sugDHase"/>
    <property type="match status" value="1"/>
</dbReference>
<dbReference type="PANTHER" id="PTHR43491">
    <property type="entry name" value="UDP-N-ACETYL-D-MANNOSAMINE DEHYDROGENASE"/>
    <property type="match status" value="1"/>
</dbReference>
<dbReference type="PANTHER" id="PTHR43491:SF2">
    <property type="entry name" value="UDP-N-ACETYL-D-MANNOSAMINE DEHYDROGENASE"/>
    <property type="match status" value="1"/>
</dbReference>
<dbReference type="Pfam" id="PF00984">
    <property type="entry name" value="UDPG_MGDP_dh"/>
    <property type="match status" value="1"/>
</dbReference>
<dbReference type="Pfam" id="PF03720">
    <property type="entry name" value="UDPG_MGDP_dh_C"/>
    <property type="match status" value="1"/>
</dbReference>
<dbReference type="Pfam" id="PF03721">
    <property type="entry name" value="UDPG_MGDP_dh_N"/>
    <property type="match status" value="1"/>
</dbReference>
<dbReference type="PIRSF" id="PIRSF500136">
    <property type="entry name" value="UDP_ManNAc_DH"/>
    <property type="match status" value="1"/>
</dbReference>
<dbReference type="PIRSF" id="PIRSF000124">
    <property type="entry name" value="UDPglc_GDPman_dh"/>
    <property type="match status" value="1"/>
</dbReference>
<dbReference type="SMART" id="SM00984">
    <property type="entry name" value="UDPG_MGDP_dh_C"/>
    <property type="match status" value="1"/>
</dbReference>
<dbReference type="SUPFAM" id="SSF48179">
    <property type="entry name" value="6-phosphogluconate dehydrogenase C-terminal domain-like"/>
    <property type="match status" value="1"/>
</dbReference>
<dbReference type="SUPFAM" id="SSF51735">
    <property type="entry name" value="NAD(P)-binding Rossmann-fold domains"/>
    <property type="match status" value="1"/>
</dbReference>
<dbReference type="SUPFAM" id="SSF52413">
    <property type="entry name" value="UDP-glucose/GDP-mannose dehydrogenase C-terminal domain"/>
    <property type="match status" value="1"/>
</dbReference>
<sequence length="427" mass="47791">MDKHEKQKIKKICVIGLGYIGLPTASMLANHGYEVIGVDISEKRVNEIKNGDFKIEEPGLLTLLKGAINSKNLNVKTKAEKADAFIICVPTPAIGCDDGSKKCDLSYVLDAVNSILPYIDEGNLIVIESTIPPETTQKIYDIIDKKVYVAHCPERVLPGKILKELVENDRIIGGINKKSAEMAKEIYKSFVEGKIYITDSNTAEMVKLMENTYRDINIALANEFAKICDEIGVNVWDAIKIANKHPRVNILNPGPGVGGHCISIDPWFIVEKTNNAKFIRSARELNDKMPYYVCNMIISELKNLNIEKPKVTVFGATYKGNVEDTRESPSKKVIDALAEKNIPVSTYDPHANSFEYELHSLEDSIVNSDCIVVLTDHNEFKSFKKEEIDEISKKLKNKLIIDTKNILNHNLWKKAGFKIKLLGNGAW</sequence>
<protein>
    <recommendedName>
        <fullName>UDP-N-acetyl-D-mannosamine dehydrogenase</fullName>
        <ecNumber evidence="3">1.1.1.336</ecNumber>
    </recommendedName>
    <alternativeName>
        <fullName>UDP-ManNAc 6-dehydrogenase</fullName>
    </alternativeName>
</protein>
<comment type="function">
    <text evidence="3">Catalyzes the four-electron oxidation of UDP-N-acetyl-D-mannosamine (UDP-ManNAc), reducing NAD(+) and releasing UDP-N-acetylmannosaminuronic acid (UDP-ManNAcA).</text>
</comment>
<comment type="catalytic activity">
    <reaction evidence="3">
        <text>UDP-N-acetyl-alpha-D-mannosamine + 2 NAD(+) + H2O = UDP-N-acetyl-alpha-D-mannosaminouronate + 2 NADH + 3 H(+)</text>
        <dbReference type="Rhea" id="RHEA:25780"/>
        <dbReference type="ChEBI" id="CHEBI:15377"/>
        <dbReference type="ChEBI" id="CHEBI:15378"/>
        <dbReference type="ChEBI" id="CHEBI:57540"/>
        <dbReference type="ChEBI" id="CHEBI:57945"/>
        <dbReference type="ChEBI" id="CHEBI:68623"/>
        <dbReference type="ChEBI" id="CHEBI:70731"/>
        <dbReference type="EC" id="1.1.1.336"/>
    </reaction>
</comment>
<comment type="subunit">
    <text evidence="3">Homotetramer; probably dimer of dimers.</text>
</comment>
<comment type="similarity">
    <text evidence="4">Belongs to the UDP-glucose/GDP-mannose dehydrogenase family.</text>
</comment>
<proteinExistence type="inferred from homology"/>
<reference key="1">
    <citation type="submission" date="2007-06" db="EMBL/GenBank/DDBJ databases">
        <title>Complete sequence of Methanococcus vannielii SB.</title>
        <authorList>
            <consortium name="US DOE Joint Genome Institute"/>
            <person name="Copeland A."/>
            <person name="Lucas S."/>
            <person name="Lapidus A."/>
            <person name="Barry K."/>
            <person name="Glavina del Rio T."/>
            <person name="Dalin E."/>
            <person name="Tice H."/>
            <person name="Pitluck S."/>
            <person name="Chain P."/>
            <person name="Malfatti S."/>
            <person name="Shin M."/>
            <person name="Vergez L."/>
            <person name="Schmutz J."/>
            <person name="Larimer F."/>
            <person name="Land M."/>
            <person name="Hauser L."/>
            <person name="Kyrpides N."/>
            <person name="Anderson I."/>
            <person name="Sieprawska-Lupa M."/>
            <person name="Whitman W.B."/>
            <person name="Richardson P."/>
        </authorList>
    </citation>
    <scope>NUCLEOTIDE SEQUENCE [LARGE SCALE GENOMIC DNA]</scope>
    <source>
        <strain>ATCC 35089 / DSM 1224 / JCM 13029 / OCM 148 / SB</strain>
    </source>
</reference>
<feature type="chain" id="PRO_0000337839" description="UDP-N-acetyl-D-mannosamine dehydrogenase">
    <location>
        <begin position="1"/>
        <end position="427"/>
    </location>
</feature>
<feature type="active site" description="Proton donor/acceptor" evidence="1">
    <location>
        <position position="207"/>
    </location>
</feature>
<feature type="active site" description="Nucleophile" evidence="1">
    <location>
        <position position="261"/>
    </location>
</feature>
<feature type="binding site" description="in chain A" evidence="2">
    <location>
        <position position="19"/>
    </location>
    <ligand>
        <name>NAD(+)</name>
        <dbReference type="ChEBI" id="CHEBI:57540"/>
        <note>ligand shared between homodimeric partners</note>
    </ligand>
</feature>
<feature type="binding site" description="in chain A" evidence="2">
    <location>
        <position position="20"/>
    </location>
    <ligand>
        <name>NAD(+)</name>
        <dbReference type="ChEBI" id="CHEBI:57540"/>
        <note>ligand shared between homodimeric partners</note>
    </ligand>
</feature>
<feature type="binding site" description="in chain A" evidence="2">
    <location>
        <position position="39"/>
    </location>
    <ligand>
        <name>NAD(+)</name>
        <dbReference type="ChEBI" id="CHEBI:57540"/>
        <note>ligand shared between homodimeric partners</note>
    </ligand>
</feature>
<feature type="binding site" description="in chain A" evidence="2">
    <location>
        <position position="44"/>
    </location>
    <ligand>
        <name>NAD(+)</name>
        <dbReference type="ChEBI" id="CHEBI:57540"/>
        <note>ligand shared between homodimeric partners</note>
    </ligand>
</feature>
<feature type="binding site" description="in chain A" evidence="2">
    <location>
        <position position="91"/>
    </location>
    <ligand>
        <name>NAD(+)</name>
        <dbReference type="ChEBI" id="CHEBI:57540"/>
        <note>ligand shared between homodimeric partners</note>
    </ligand>
</feature>
<feature type="binding site" description="in chain A" evidence="2">
    <location>
        <position position="130"/>
    </location>
    <ligand>
        <name>NAD(+)</name>
        <dbReference type="ChEBI" id="CHEBI:57540"/>
        <note>ligand shared between homodimeric partners</note>
    </ligand>
</feature>
<feature type="binding site" description="in chain A" evidence="1">
    <location>
        <position position="155"/>
    </location>
    <ligand>
        <name>UDP-N-acetyl-alpha-D-mannosaminouronate</name>
        <dbReference type="ChEBI" id="CHEBI:70731"/>
        <note>ligand shared between homodimeric partners</note>
    </ligand>
</feature>
<feature type="binding site" description="in chain A" evidence="1">
    <location>
        <position position="156"/>
    </location>
    <ligand>
        <name>UDP-N-acetyl-alpha-D-mannosaminouronate</name>
        <dbReference type="ChEBI" id="CHEBI:70731"/>
        <note>ligand shared between homodimeric partners</note>
    </ligand>
</feature>
<feature type="binding site" description="in chain A" evidence="1">
    <location>
        <position position="207"/>
    </location>
    <ligand>
        <name>UDP-N-acetyl-alpha-D-mannosaminouronate</name>
        <dbReference type="ChEBI" id="CHEBI:70731"/>
        <note>ligand shared between homodimeric partners</note>
    </ligand>
</feature>
<feature type="binding site" description="in chain A" evidence="1">
    <location>
        <position position="211"/>
    </location>
    <ligand>
        <name>UDP-N-acetyl-alpha-D-mannosaminouronate</name>
        <dbReference type="ChEBI" id="CHEBI:70731"/>
        <note>ligand shared between homodimeric partners</note>
    </ligand>
</feature>
<feature type="binding site" description="in chain A" evidence="1">
    <location>
        <position position="214"/>
    </location>
    <ligand>
        <name>UDP-N-acetyl-alpha-D-mannosaminouronate</name>
        <dbReference type="ChEBI" id="CHEBI:70731"/>
        <note>ligand shared between homodimeric partners</note>
    </ligand>
</feature>
<feature type="binding site" description="in chain B" evidence="1">
    <location>
        <position position="245"/>
    </location>
    <ligand>
        <name>UDP-N-acetyl-alpha-D-mannosaminouronate</name>
        <dbReference type="ChEBI" id="CHEBI:70731"/>
        <note>ligand shared between homodimeric partners</note>
    </ligand>
</feature>
<feature type="binding site" description="in chain B" evidence="1">
    <location>
        <position position="247"/>
    </location>
    <ligand>
        <name>UDP-N-acetyl-alpha-D-mannosaminouronate</name>
        <dbReference type="ChEBI" id="CHEBI:70731"/>
        <note>ligand shared between homodimeric partners</note>
    </ligand>
</feature>
<feature type="binding site" description="in chain A" evidence="1">
    <location>
        <position position="258"/>
    </location>
    <ligand>
        <name>UDP-N-acetyl-alpha-D-mannosaminouronate</name>
        <dbReference type="ChEBI" id="CHEBI:70731"/>
        <note>ligand shared between homodimeric partners</note>
    </ligand>
</feature>
<feature type="binding site" description="in chain A" evidence="1">
    <location>
        <position position="318"/>
    </location>
    <ligand>
        <name>UDP-N-acetyl-alpha-D-mannosaminouronate</name>
        <dbReference type="ChEBI" id="CHEBI:70731"/>
        <note>ligand shared between homodimeric partners</note>
    </ligand>
</feature>
<feature type="binding site" description="in chain A" evidence="1">
    <location>
        <position position="319"/>
    </location>
    <ligand>
        <name>UDP-N-acetyl-alpha-D-mannosaminouronate</name>
        <dbReference type="ChEBI" id="CHEBI:70731"/>
        <note>ligand shared between homodimeric partners</note>
    </ligand>
</feature>
<feature type="binding site" description="in chain B" evidence="2">
    <location>
        <position position="326"/>
    </location>
    <ligand>
        <name>NAD(+)</name>
        <dbReference type="ChEBI" id="CHEBI:57540"/>
        <note>ligand shared between homodimeric partners</note>
    </ligand>
</feature>
<feature type="binding site" description="in chain A" evidence="1">
    <location>
        <position position="404"/>
    </location>
    <ligand>
        <name>UDP-N-acetyl-alpha-D-mannosaminouronate</name>
        <dbReference type="ChEBI" id="CHEBI:70731"/>
        <note>ligand shared between homodimeric partners</note>
    </ligand>
</feature>
<gene>
    <name type="primary">wecC</name>
    <name type="ordered locus">Mevan_1584</name>
</gene>